<sequence length="594" mass="68142">MNELIKHKLELLPDSPGCYLHKDKAGTIIYVGKAKNLRNRVRSYFRGSHDTKTELLVSEIADFEFIVTGSNTEALLLEINLIQENMPKYNIKLKDDKSYPFIKITNEPFPRLLITRQIKKNDGLYFGPYPDAYTATEVKKLLDRIFPFKKCKNPVNKVCFYYHLGQCQAHTICHTDKAYWDSLVADVKQFLNGKDDKIIDDLRSKMLEASHNQEFERAAEYRDLISGIATMRTKQRVMSKDLQDRDIFGYFVDKGWMCVQVFFVRQGKLIQRDVNMFPYYNEAEEDFLTYVGQFYSDQRHLIPKEVFIPETIDETLVAAIVPARIVKPQRGEKKQLVALATKNARVSLQQKFDLLEKDLRKTSGAIEHLGQLLGIEKPVRIEAFDNSNIQGTSPVAAMVVFVDGKPSKKDYRKFKIKTVIGPDDYASMREVIYRRYSRVKHEGLQAPDLIIVDGGQGQVKAARDVIEHQLGLSIPVAGLQKNDKHQTHELLFGNPLAVVELPRNSEEFFLLHRIQDEVHRFAITFHRQVRSKNAFSSKLDHIAGLGPKRKQLLLKRFKSMAALEQASLEEIQQLGIPKTVAEALIDHLTSKSDT</sequence>
<protein>
    <recommendedName>
        <fullName evidence="1">UvrABC system protein C</fullName>
        <shortName evidence="1">Protein UvrC</shortName>
    </recommendedName>
    <alternativeName>
        <fullName evidence="1">Excinuclease ABC subunit C</fullName>
    </alternativeName>
</protein>
<accession>C0MDW7</accession>
<comment type="function">
    <text evidence="1">The UvrABC repair system catalyzes the recognition and processing of DNA lesions. UvrC both incises the 5' and 3' sides of the lesion. The N-terminal half is responsible for the 3' incision and the C-terminal half is responsible for the 5' incision.</text>
</comment>
<comment type="subunit">
    <text evidence="1">Interacts with UvrB in an incision complex.</text>
</comment>
<comment type="subcellular location">
    <subcellularLocation>
        <location evidence="1">Cytoplasm</location>
    </subcellularLocation>
</comment>
<comment type="similarity">
    <text evidence="1">Belongs to the UvrC family.</text>
</comment>
<gene>
    <name evidence="1" type="primary">uvrC</name>
    <name type="ordered locus">SZO_07930</name>
</gene>
<proteinExistence type="inferred from homology"/>
<dbReference type="EMBL" id="FM204884">
    <property type="protein sequence ID" value="CAW98952.1"/>
    <property type="molecule type" value="Genomic_DNA"/>
</dbReference>
<dbReference type="SMR" id="C0MDW7"/>
<dbReference type="KEGG" id="seq:SZO_07930"/>
<dbReference type="eggNOG" id="COG0322">
    <property type="taxonomic scope" value="Bacteria"/>
</dbReference>
<dbReference type="HOGENOM" id="CLU_014841_3_2_9"/>
<dbReference type="Proteomes" id="UP000001368">
    <property type="component" value="Chromosome"/>
</dbReference>
<dbReference type="GO" id="GO:0005737">
    <property type="term" value="C:cytoplasm"/>
    <property type="evidence" value="ECO:0007669"/>
    <property type="project" value="UniProtKB-SubCell"/>
</dbReference>
<dbReference type="GO" id="GO:0009380">
    <property type="term" value="C:excinuclease repair complex"/>
    <property type="evidence" value="ECO:0007669"/>
    <property type="project" value="InterPro"/>
</dbReference>
<dbReference type="GO" id="GO:0003677">
    <property type="term" value="F:DNA binding"/>
    <property type="evidence" value="ECO:0007669"/>
    <property type="project" value="UniProtKB-UniRule"/>
</dbReference>
<dbReference type="GO" id="GO:0009381">
    <property type="term" value="F:excinuclease ABC activity"/>
    <property type="evidence" value="ECO:0007669"/>
    <property type="project" value="UniProtKB-UniRule"/>
</dbReference>
<dbReference type="GO" id="GO:0006289">
    <property type="term" value="P:nucleotide-excision repair"/>
    <property type="evidence" value="ECO:0007669"/>
    <property type="project" value="UniProtKB-UniRule"/>
</dbReference>
<dbReference type="GO" id="GO:0009432">
    <property type="term" value="P:SOS response"/>
    <property type="evidence" value="ECO:0007669"/>
    <property type="project" value="UniProtKB-UniRule"/>
</dbReference>
<dbReference type="CDD" id="cd10434">
    <property type="entry name" value="GIY-YIG_UvrC_Cho"/>
    <property type="match status" value="1"/>
</dbReference>
<dbReference type="FunFam" id="3.30.420.340:FF:000002">
    <property type="entry name" value="UvrABC system protein C"/>
    <property type="match status" value="1"/>
</dbReference>
<dbReference type="FunFam" id="3.40.1440.10:FF:000001">
    <property type="entry name" value="UvrABC system protein C"/>
    <property type="match status" value="1"/>
</dbReference>
<dbReference type="Gene3D" id="1.10.150.20">
    <property type="entry name" value="5' to 3' exonuclease, C-terminal subdomain"/>
    <property type="match status" value="1"/>
</dbReference>
<dbReference type="Gene3D" id="3.40.1440.10">
    <property type="entry name" value="GIY-YIG endonuclease"/>
    <property type="match status" value="1"/>
</dbReference>
<dbReference type="Gene3D" id="4.10.860.10">
    <property type="entry name" value="UVR domain"/>
    <property type="match status" value="1"/>
</dbReference>
<dbReference type="Gene3D" id="3.30.420.340">
    <property type="entry name" value="UvrC, RNAse H endonuclease domain"/>
    <property type="match status" value="1"/>
</dbReference>
<dbReference type="HAMAP" id="MF_00203">
    <property type="entry name" value="UvrC"/>
    <property type="match status" value="1"/>
</dbReference>
<dbReference type="InterPro" id="IPR000305">
    <property type="entry name" value="GIY-YIG_endonuc"/>
</dbReference>
<dbReference type="InterPro" id="IPR035901">
    <property type="entry name" value="GIY-YIG_endonuc_sf"/>
</dbReference>
<dbReference type="InterPro" id="IPR047296">
    <property type="entry name" value="GIY-YIG_UvrC_Cho"/>
</dbReference>
<dbReference type="InterPro" id="IPR010994">
    <property type="entry name" value="RuvA_2-like"/>
</dbReference>
<dbReference type="InterPro" id="IPR001943">
    <property type="entry name" value="UVR_dom"/>
</dbReference>
<dbReference type="InterPro" id="IPR036876">
    <property type="entry name" value="UVR_dom_sf"/>
</dbReference>
<dbReference type="InterPro" id="IPR050066">
    <property type="entry name" value="UvrABC_protein_C"/>
</dbReference>
<dbReference type="InterPro" id="IPR004791">
    <property type="entry name" value="UvrC"/>
</dbReference>
<dbReference type="InterPro" id="IPR001162">
    <property type="entry name" value="UvrC_RNase_H_dom"/>
</dbReference>
<dbReference type="InterPro" id="IPR038476">
    <property type="entry name" value="UvrC_RNase_H_dom_sf"/>
</dbReference>
<dbReference type="NCBIfam" id="TIGR00194">
    <property type="entry name" value="uvrC"/>
    <property type="match status" value="1"/>
</dbReference>
<dbReference type="PANTHER" id="PTHR30562:SF1">
    <property type="entry name" value="UVRABC SYSTEM PROTEIN C"/>
    <property type="match status" value="1"/>
</dbReference>
<dbReference type="PANTHER" id="PTHR30562">
    <property type="entry name" value="UVRC/OXIDOREDUCTASE"/>
    <property type="match status" value="1"/>
</dbReference>
<dbReference type="Pfam" id="PF01541">
    <property type="entry name" value="GIY-YIG"/>
    <property type="match status" value="1"/>
</dbReference>
<dbReference type="Pfam" id="PF14520">
    <property type="entry name" value="HHH_5"/>
    <property type="match status" value="1"/>
</dbReference>
<dbReference type="Pfam" id="PF02151">
    <property type="entry name" value="UVR"/>
    <property type="match status" value="1"/>
</dbReference>
<dbReference type="Pfam" id="PF22920">
    <property type="entry name" value="UvrC_RNaseH"/>
    <property type="match status" value="1"/>
</dbReference>
<dbReference type="Pfam" id="PF08459">
    <property type="entry name" value="UvrC_RNaseH_dom"/>
    <property type="match status" value="1"/>
</dbReference>
<dbReference type="SMART" id="SM00465">
    <property type="entry name" value="GIYc"/>
    <property type="match status" value="1"/>
</dbReference>
<dbReference type="SUPFAM" id="SSF46600">
    <property type="entry name" value="C-terminal UvrC-binding domain of UvrB"/>
    <property type="match status" value="1"/>
</dbReference>
<dbReference type="SUPFAM" id="SSF82771">
    <property type="entry name" value="GIY-YIG endonuclease"/>
    <property type="match status" value="1"/>
</dbReference>
<dbReference type="SUPFAM" id="SSF47781">
    <property type="entry name" value="RuvA domain 2-like"/>
    <property type="match status" value="1"/>
</dbReference>
<dbReference type="PROSITE" id="PS50164">
    <property type="entry name" value="GIY_YIG"/>
    <property type="match status" value="1"/>
</dbReference>
<dbReference type="PROSITE" id="PS50151">
    <property type="entry name" value="UVR"/>
    <property type="match status" value="1"/>
</dbReference>
<dbReference type="PROSITE" id="PS50165">
    <property type="entry name" value="UVRC"/>
    <property type="match status" value="1"/>
</dbReference>
<keyword id="KW-0963">Cytoplasm</keyword>
<keyword id="KW-0227">DNA damage</keyword>
<keyword id="KW-0228">DNA excision</keyword>
<keyword id="KW-0234">DNA repair</keyword>
<keyword id="KW-0267">Excision nuclease</keyword>
<keyword id="KW-0742">SOS response</keyword>
<reference key="1">
    <citation type="journal article" date="2009" name="PLoS Pathog.">
        <title>Genomic evidence for the evolution of Streptococcus equi: host restriction, increased virulence, and genetic exchange with human pathogens.</title>
        <authorList>
            <person name="Holden M.T.G."/>
            <person name="Heather Z."/>
            <person name="Paillot R."/>
            <person name="Steward K.F."/>
            <person name="Webb K."/>
            <person name="Ainslie F."/>
            <person name="Jourdan T."/>
            <person name="Bason N.C."/>
            <person name="Holroyd N.E."/>
            <person name="Mungall K."/>
            <person name="Quail M.A."/>
            <person name="Sanders M."/>
            <person name="Simmonds M."/>
            <person name="Willey D."/>
            <person name="Brooks K."/>
            <person name="Aanensen D.M."/>
            <person name="Spratt B.G."/>
            <person name="Jolley K.A."/>
            <person name="Maiden M.C.J."/>
            <person name="Kehoe M."/>
            <person name="Chanter N."/>
            <person name="Bentley S.D."/>
            <person name="Robinson C."/>
            <person name="Maskell D.J."/>
            <person name="Parkhill J."/>
            <person name="Waller A.S."/>
        </authorList>
    </citation>
    <scope>NUCLEOTIDE SEQUENCE [LARGE SCALE GENOMIC DNA]</scope>
    <source>
        <strain>H70</strain>
    </source>
</reference>
<organism>
    <name type="scientific">Streptococcus equi subsp. zooepidemicus (strain H70)</name>
    <dbReference type="NCBI Taxonomy" id="553483"/>
    <lineage>
        <taxon>Bacteria</taxon>
        <taxon>Bacillati</taxon>
        <taxon>Bacillota</taxon>
        <taxon>Bacilli</taxon>
        <taxon>Lactobacillales</taxon>
        <taxon>Streptococcaceae</taxon>
        <taxon>Streptococcus</taxon>
    </lineage>
</organism>
<name>UVRC_STRS7</name>
<feature type="chain" id="PRO_1000204128" description="UvrABC system protein C">
    <location>
        <begin position="1"/>
        <end position="594"/>
    </location>
</feature>
<feature type="domain" description="GIY-YIG" evidence="1">
    <location>
        <begin position="14"/>
        <end position="91"/>
    </location>
</feature>
<feature type="domain" description="UVR" evidence="1">
    <location>
        <begin position="196"/>
        <end position="231"/>
    </location>
</feature>
<evidence type="ECO:0000255" key="1">
    <source>
        <dbReference type="HAMAP-Rule" id="MF_00203"/>
    </source>
</evidence>